<reference key="1">
    <citation type="submission" date="2008-08" db="EMBL/GenBank/DDBJ databases">
        <title>Draft genome sequence of Bacteroides plebeius (DSM 17135).</title>
        <authorList>
            <person name="Sudarsanam P."/>
            <person name="Ley R."/>
            <person name="Guruge J."/>
            <person name="Turnbaugh P.J."/>
            <person name="Mahowald M."/>
            <person name="Liep D."/>
            <person name="Gordon J."/>
        </authorList>
    </citation>
    <scope>NUCLEOTIDE SEQUENCE [LARGE SCALE GENOMIC DNA]</scope>
    <source>
        <strain>DSM 17135 / JCM 12973 / CCUG 54634 / M2</strain>
    </source>
</reference>
<reference key="2">
    <citation type="journal article" date="2023" name="Carbohydr. Polym.">
        <title>Structural characterization on a beta-agarase Aga86A_Wa from Wenyingzhuangia aestuarii reveals the prevalent methyl-galactose accommodation capacity of GH86 enzymes at subsite -1.</title>
        <authorList>
            <person name="Zhang Y."/>
            <person name="Dong S."/>
            <person name="Chen G."/>
            <person name="Cao S."/>
            <person name="Shen J."/>
            <person name="Mei X."/>
            <person name="Cui Q."/>
            <person name="Feng Y."/>
            <person name="Chang Y."/>
            <person name="Wang Y."/>
            <person name="Xue C."/>
        </authorList>
    </citation>
    <scope>FUNCTION</scope>
    <scope>CATALYTIC ACTIVITY</scope>
    <scope>DOMAIN</scope>
    <source>
        <strain>DSM 17135 / JCM 12973 / CCUG 54634 / M2</strain>
    </source>
</reference>
<reference key="3">
    <citation type="journal article" date="2012" name="Proc. Natl. Acad. Sci. U.S.A.">
        <title>Bacteria of the human gut microbiome catabolize red seaweed glycans with carbohydrate-active enzyme updates from extrinsic microbes.</title>
        <authorList>
            <person name="Hehemann J.H."/>
            <person name="Kelly A.G."/>
            <person name="Pudlo N.A."/>
            <person name="Martens E.C."/>
            <person name="Boraston A.B."/>
        </authorList>
    </citation>
    <scope>X-RAY CRYSTALLOGRAPHY (1.33 ANGSTROMS) OF 30-598 IN COMPLEX WITH PORPHYRAN-AGAROSE-OLIGOSACCHARIDE</scope>
    <scope>FUNCTION</scope>
    <scope>CATALYTIC ACTIVITY</scope>
    <scope>ACTIVE SITE</scope>
    <source>
        <strain>DSM 17135 / JCM 12973 / CCUG 54634 / M2</strain>
    </source>
</reference>
<comment type="function">
    <text evidence="2 3">Cleaves the sulfated polysaccharide porphyran at the (1-&gt;4) linkages between beta-D-galactopyranose and alpha-L-galactopyranose-6-sulfate, forming mostly the disaccharide alpha-L-galactopyranose-6-sulfate-(1-&gt;3)-beta-D-galactose (PubMed:23150581). Some longer oligosaccharides of even number of residues are also observed (PubMed:23150581). Inactive on the non-sulfated agarose portion of the porphyran backbone (PubMed:23150581). Can also use methylated galactoses (PubMed:36746585).</text>
</comment>
<comment type="catalytic activity">
    <reaction evidence="2 3">
        <text>Hydrolysis of beta-D-galactopyranose-(1-&gt;4)-alpha-L-galactopyranose-6-sulfate linkages in porphyran.</text>
        <dbReference type="EC" id="3.2.1.178"/>
    </reaction>
</comment>
<comment type="domain">
    <text evidence="3">An accommodation pocket formed by Phe-324, Tyr-237 and Ile-283 at subsite -1 (cleavage subsite) contributes to the methyl-galactose tolerance of BpGH86A.</text>
</comment>
<comment type="miscellaneous">
    <text evidence="6">Gut bacteria supply the human body with energy from dietary polysaccharides through glycosidases that are absent in the human genome. Beta-porphyranases, which are active on sulfated polysaccharides from marine red algae of the genus Porphyra, are present in marine bacteria. They are absent from metagenome data of gut bacteria, except from the genome of the gut bacterium B.plebeius isolated from Japanese individuals. Seaweeds make an important contribution to the diet in Japan and Porphyra (nori) is the most important nutritional seaweed used to prepare sushi, suggesting that seaweeds with associated marine bacteria have been the route by which genes coding for beta-porphyranases have been transferred in human gut B.plebeius genome (PubMed:23150581).</text>
</comment>
<comment type="similarity">
    <text evidence="5">Belongs to the glycosyl hydrolase 86 family.</text>
</comment>
<comment type="online information" name="Protein Spotlight">
    <link uri="https://www.proteinspotlight.org/back_issues/158/"/>
    <text>A gut's tale - Issue 158 of March 2014</text>
</comment>
<name>PORA_PHOPM</name>
<sequence>MSYKYIFLLSAFTLGVPPGIYCQGRNEVVVDYNTRRFLSGVSELDRSKYFNIHSTSDDDKDVGKFLADYQVGLGRKFWGPYSYAYNKTHEVGKYPQMKPYSGNISVKRYIATEHPYVQHIQGGIDVQAAGAWSAEYYSNSELVPEFFEPLNEPFVHANDAGFTVQGQAMRELMVDFYASIGKHIHNNPRLNGKMKVIGYAAAYPAWEDGNFNYWNTRMKMFIDRAGAYMDGFSVHLYDGINVTGTDTKRSGSNSEAVLDMVEAYSYIKFGHVKPLAISEFGGIDNSKPDDSYDDISSVRSVSSFNHFLFNLMERQDNLFISIPFVSDKAEWHITAANNYTSYSAALFIPDNPQNLKNTTWRLNDKKYFFELWKNVKGERVDITSSNPDIQVQAFKDGGRLYIALDNLDDNPQTVYLNNKNSWKDVSNVTKRSLYVNYNAGIEYTEQNVPSMPESISIVPNQTIVLVADVSSSAFTNSIIRNKYYSSEYLKPISAGSSLSFPFTGIESGSGRASLRMSIGRPVSASKKPVVKINGTAVSVPDNWKGYGQSNRNIFFGMIEVPFDIQLLKNGDNNVDITFSDGGGHVSSMILQVEKYTVSTLQNGTFSEGLSAWQPLGNYGTVCVQTDNAGNNVACISGHAGLMQRVDMESGRTYRFSADVKTEGACKLKVMLQDMSTGTVYTEEFSSPGNYKAVSFDFNSTVKKVVCAIVCERQNDAAWIDNIVLLPQN</sequence>
<evidence type="ECO:0000255" key="1"/>
<evidence type="ECO:0000269" key="2">
    <source>
    </source>
</evidence>
<evidence type="ECO:0000269" key="3">
    <source>
    </source>
</evidence>
<evidence type="ECO:0000303" key="4">
    <source>
    </source>
</evidence>
<evidence type="ECO:0000305" key="5"/>
<evidence type="ECO:0000305" key="6">
    <source>
    </source>
</evidence>
<evidence type="ECO:0000312" key="7">
    <source>
        <dbReference type="EMBL" id="EDY95427.1"/>
    </source>
</evidence>
<evidence type="ECO:0007744" key="8">
    <source>
        <dbReference type="PDB" id="4AW7"/>
    </source>
</evidence>
<evidence type="ECO:0007829" key="9">
    <source>
        <dbReference type="PDB" id="4AW7"/>
    </source>
</evidence>
<feature type="signal peptide" evidence="1">
    <location>
        <begin position="1"/>
        <end position="22"/>
    </location>
</feature>
<feature type="chain" id="PRO_0000422034" description="Beta-porphyranase A">
    <location>
        <begin position="23"/>
        <end position="728"/>
    </location>
</feature>
<feature type="domain" description="CBM-cenC" evidence="1">
    <location>
        <begin position="599"/>
        <end position="701"/>
    </location>
</feature>
<feature type="active site" description="Proton donor" evidence="6">
    <location>
        <position position="152"/>
    </location>
</feature>
<feature type="active site" description="Nucleophile" evidence="6">
    <location>
        <position position="279"/>
    </location>
</feature>
<feature type="binding site" evidence="2 8">
    <location>
        <position position="53"/>
    </location>
    <ligand>
        <name>substrate</name>
    </ligand>
</feature>
<feature type="binding site" evidence="2 8">
    <location>
        <position position="76"/>
    </location>
    <ligand>
        <name>substrate</name>
    </ligand>
</feature>
<feature type="binding site" evidence="2 8">
    <location>
        <position position="78"/>
    </location>
    <ligand>
        <name>substrate</name>
    </ligand>
</feature>
<feature type="binding site" evidence="2 8">
    <location>
        <position position="87"/>
    </location>
    <ligand>
        <name>substrate</name>
    </ligand>
</feature>
<feature type="binding site" evidence="2 8">
    <location>
        <position position="114"/>
    </location>
    <ligand>
        <name>substrate</name>
    </ligand>
</feature>
<feature type="binding site" evidence="2 8">
    <location>
        <position position="151"/>
    </location>
    <ligand>
        <name>substrate</name>
    </ligand>
</feature>
<feature type="binding site" evidence="2 8">
    <location>
        <position position="235"/>
    </location>
    <ligand>
        <name>substrate</name>
    </ligand>
</feature>
<feature type="binding site" evidence="2 8">
    <location>
        <position position="279"/>
    </location>
    <ligand>
        <name>substrate</name>
    </ligand>
</feature>
<feature type="binding site" evidence="2 8">
    <location>
        <position position="326"/>
    </location>
    <ligand>
        <name>substrate</name>
    </ligand>
</feature>
<feature type="binding site" evidence="2 8">
    <location>
        <position position="331"/>
    </location>
    <ligand>
        <name>substrate</name>
    </ligand>
</feature>
<feature type="strand" evidence="9">
    <location>
        <begin position="30"/>
        <end position="38"/>
    </location>
</feature>
<feature type="helix" evidence="9">
    <location>
        <begin position="46"/>
        <end position="48"/>
    </location>
</feature>
<feature type="strand" evidence="9">
    <location>
        <begin position="50"/>
        <end position="53"/>
    </location>
</feature>
<feature type="helix" evidence="9">
    <location>
        <begin position="60"/>
        <end position="69"/>
    </location>
</feature>
<feature type="strand" evidence="9">
    <location>
        <begin position="75"/>
        <end position="77"/>
    </location>
</feature>
<feature type="helix" evidence="9">
    <location>
        <begin position="80"/>
        <end position="88"/>
    </location>
</feature>
<feature type="strand" evidence="9">
    <location>
        <begin position="105"/>
        <end position="112"/>
    </location>
</feature>
<feature type="turn" evidence="9">
    <location>
        <begin position="117"/>
        <end position="119"/>
    </location>
</feature>
<feature type="helix" evidence="9">
    <location>
        <begin position="126"/>
        <end position="138"/>
    </location>
</feature>
<feature type="strand" evidence="9">
    <location>
        <begin position="141"/>
        <end position="148"/>
    </location>
</feature>
<feature type="strand" evidence="9">
    <location>
        <begin position="150"/>
        <end position="152"/>
    </location>
</feature>
<feature type="helix" evidence="9">
    <location>
        <begin position="154"/>
        <end position="156"/>
    </location>
</feature>
<feature type="helix" evidence="9">
    <location>
        <begin position="166"/>
        <end position="185"/>
    </location>
</feature>
<feature type="turn" evidence="9">
    <location>
        <begin position="188"/>
        <end position="193"/>
    </location>
</feature>
<feature type="strand" evidence="9">
    <location>
        <begin position="195"/>
        <end position="202"/>
    </location>
</feature>
<feature type="turn" evidence="9">
    <location>
        <begin position="206"/>
        <end position="211"/>
    </location>
</feature>
<feature type="helix" evidence="9">
    <location>
        <begin position="212"/>
        <end position="216"/>
    </location>
</feature>
<feature type="helix" evidence="9">
    <location>
        <begin position="218"/>
        <end position="225"/>
    </location>
</feature>
<feature type="helix" evidence="9">
    <location>
        <begin position="226"/>
        <end position="228"/>
    </location>
</feature>
<feature type="strand" evidence="9">
    <location>
        <begin position="230"/>
        <end position="240"/>
    </location>
</feature>
<feature type="helix" evidence="9">
    <location>
        <begin position="252"/>
        <end position="269"/>
    </location>
</feature>
<feature type="strand" evidence="9">
    <location>
        <begin position="275"/>
        <end position="284"/>
    </location>
</feature>
<feature type="turn" evidence="9">
    <location>
        <begin position="294"/>
        <end position="299"/>
    </location>
</feature>
<feature type="helix" evidence="9">
    <location>
        <begin position="300"/>
        <end position="312"/>
    </location>
</feature>
<feature type="helix" evidence="9">
    <location>
        <begin position="313"/>
        <end position="317"/>
    </location>
</feature>
<feature type="strand" evidence="9">
    <location>
        <begin position="318"/>
        <end position="324"/>
    </location>
</feature>
<feature type="helix" evidence="9">
    <location>
        <begin position="330"/>
        <end position="332"/>
    </location>
</feature>
<feature type="helix" evidence="9">
    <location>
        <begin position="335"/>
        <end position="337"/>
    </location>
</feature>
<feature type="strand" evidence="9">
    <location>
        <begin position="346"/>
        <end position="350"/>
    </location>
</feature>
<feature type="turn" evidence="9">
    <location>
        <begin position="355"/>
        <end position="357"/>
    </location>
</feature>
<feature type="strand" evidence="9">
    <location>
        <begin position="360"/>
        <end position="362"/>
    </location>
</feature>
<feature type="helix" evidence="9">
    <location>
        <begin position="366"/>
        <end position="372"/>
    </location>
</feature>
<feature type="strand" evidence="9">
    <location>
        <begin position="377"/>
        <end position="386"/>
    </location>
</feature>
<feature type="strand" evidence="9">
    <location>
        <begin position="389"/>
        <end position="396"/>
    </location>
</feature>
<feature type="strand" evidence="9">
    <location>
        <begin position="399"/>
        <end position="406"/>
    </location>
</feature>
<feature type="strand" evidence="9">
    <location>
        <begin position="408"/>
        <end position="410"/>
    </location>
</feature>
<feature type="strand" evidence="9">
    <location>
        <begin position="412"/>
        <end position="417"/>
    </location>
</feature>
<feature type="turn" evidence="9">
    <location>
        <begin position="419"/>
        <end position="424"/>
    </location>
</feature>
<feature type="strand" evidence="9">
    <location>
        <begin position="425"/>
        <end position="436"/>
    </location>
</feature>
<feature type="turn" evidence="9">
    <location>
        <begin position="437"/>
        <end position="439"/>
    </location>
</feature>
<feature type="strand" evidence="9">
    <location>
        <begin position="440"/>
        <end position="450"/>
    </location>
</feature>
<feature type="strand" evidence="9">
    <location>
        <begin position="453"/>
        <end position="457"/>
    </location>
</feature>
<feature type="strand" evidence="9">
    <location>
        <begin position="461"/>
        <end position="469"/>
    </location>
</feature>
<feature type="strand" evidence="9">
    <location>
        <begin position="476"/>
        <end position="484"/>
    </location>
</feature>
<feature type="strand" evidence="9">
    <location>
        <begin position="489"/>
        <end position="491"/>
    </location>
</feature>
<feature type="strand" evidence="9">
    <location>
        <begin position="498"/>
        <end position="505"/>
    </location>
</feature>
<feature type="strand" evidence="9">
    <location>
        <begin position="509"/>
        <end position="521"/>
    </location>
</feature>
<feature type="strand" evidence="9">
    <location>
        <begin position="529"/>
        <end position="532"/>
    </location>
</feature>
<feature type="strand" evidence="9">
    <location>
        <begin position="535"/>
        <end position="537"/>
    </location>
</feature>
<feature type="strand" evidence="9">
    <location>
        <begin position="551"/>
        <end position="562"/>
    </location>
</feature>
<feature type="helix" evidence="9">
    <location>
        <begin position="564"/>
        <end position="566"/>
    </location>
</feature>
<feature type="strand" evidence="9">
    <location>
        <begin position="569"/>
        <end position="577"/>
    </location>
</feature>
<feature type="strand" evidence="9">
    <location>
        <begin position="583"/>
        <end position="596"/>
    </location>
</feature>
<accession>B5CY96</accession>
<proteinExistence type="evidence at protein level"/>
<gene>
    <name evidence="7" type="ORF">BACPLE_01693</name>
</gene>
<dbReference type="EC" id="3.2.1.178" evidence="2 3"/>
<dbReference type="EMBL" id="ABQC02000019">
    <property type="protein sequence ID" value="EDY95427.1"/>
    <property type="molecule type" value="Genomic_DNA"/>
</dbReference>
<dbReference type="RefSeq" id="WP_007560960.1">
    <property type="nucleotide sequence ID" value="NZ_DS990130.1"/>
</dbReference>
<dbReference type="PDB" id="4AW7">
    <property type="method" value="X-ray"/>
    <property type="resolution" value="1.33 A"/>
    <property type="chains" value="A=30-598"/>
</dbReference>
<dbReference type="PDBsum" id="4AW7"/>
<dbReference type="SMR" id="B5CY96"/>
<dbReference type="CAZy" id="GH86">
    <property type="family name" value="Glycoside Hydrolase Family 86"/>
</dbReference>
<dbReference type="GeneID" id="43184721"/>
<dbReference type="eggNOG" id="COG3401">
    <property type="taxonomic scope" value="Bacteria"/>
</dbReference>
<dbReference type="HOGENOM" id="CLU_019012_1_0_10"/>
<dbReference type="OrthoDB" id="974840at2"/>
<dbReference type="BRENDA" id="3.2.1.178">
    <property type="organism ID" value="14050"/>
</dbReference>
<dbReference type="EvolutionaryTrace" id="B5CY96"/>
<dbReference type="Proteomes" id="UP000003452">
    <property type="component" value="Unassembled WGS sequence"/>
</dbReference>
<dbReference type="GO" id="GO:0016798">
    <property type="term" value="F:hydrolase activity, acting on glycosyl bonds"/>
    <property type="evidence" value="ECO:0007669"/>
    <property type="project" value="UniProtKB-KW"/>
</dbReference>
<dbReference type="CDD" id="cd21510">
    <property type="entry name" value="agarase_cat"/>
    <property type="match status" value="1"/>
</dbReference>
<dbReference type="Gene3D" id="2.60.120.1200">
    <property type="match status" value="1"/>
</dbReference>
<dbReference type="Gene3D" id="2.60.120.260">
    <property type="entry name" value="Galactose-binding domain-like"/>
    <property type="match status" value="1"/>
</dbReference>
<dbReference type="Gene3D" id="3.20.20.80">
    <property type="entry name" value="Glycosidases"/>
    <property type="match status" value="1"/>
</dbReference>
<dbReference type="Gene3D" id="2.60.40.1180">
    <property type="entry name" value="Golgi alpha-mannosidase II"/>
    <property type="match status" value="1"/>
</dbReference>
<dbReference type="InterPro" id="IPR041224">
    <property type="entry name" value="BPA_C"/>
</dbReference>
<dbReference type="InterPro" id="IPR003305">
    <property type="entry name" value="CenC_carb-bd"/>
</dbReference>
<dbReference type="InterPro" id="IPR008979">
    <property type="entry name" value="Galactose-bd-like_sf"/>
</dbReference>
<dbReference type="InterPro" id="IPR013780">
    <property type="entry name" value="Glyco_hydro_b"/>
</dbReference>
<dbReference type="InterPro" id="IPR017853">
    <property type="entry name" value="Glycoside_hydrolase_SF"/>
</dbReference>
<dbReference type="InterPro" id="IPR040527">
    <property type="entry name" value="Porphyrn_b-sand_dom_1"/>
</dbReference>
<dbReference type="Pfam" id="PF18040">
    <property type="entry name" value="BPA_C"/>
    <property type="match status" value="1"/>
</dbReference>
<dbReference type="Pfam" id="PF02018">
    <property type="entry name" value="CBM_4_9"/>
    <property type="match status" value="1"/>
</dbReference>
<dbReference type="Pfam" id="PF18206">
    <property type="entry name" value="Porphyrn_cat_1"/>
    <property type="match status" value="1"/>
</dbReference>
<dbReference type="SUPFAM" id="SSF51445">
    <property type="entry name" value="(Trans)glycosidases"/>
    <property type="match status" value="1"/>
</dbReference>
<dbReference type="SUPFAM" id="SSF49785">
    <property type="entry name" value="Galactose-binding domain-like"/>
    <property type="match status" value="1"/>
</dbReference>
<protein>
    <recommendedName>
        <fullName>Beta-porphyranase A</fullName>
        <ecNumber evidence="2 3">3.2.1.178</ecNumber>
    </recommendedName>
    <alternativeName>
        <fullName evidence="4">BpGH86A</fullName>
    </alternativeName>
    <alternativeName>
        <fullName>Glycosyl hydrolase 86 family protein A</fullName>
        <shortName>GH86A</shortName>
    </alternativeName>
</protein>
<keyword id="KW-0002">3D-structure</keyword>
<keyword id="KW-0326">Glycosidase</keyword>
<keyword id="KW-0378">Hydrolase</keyword>
<keyword id="KW-0732">Signal</keyword>
<organism>
    <name type="scientific">Phocaeicola plebeius (strain DSM 17135 / JCM 12973 / CCUG 54634 / M2)</name>
    <name type="common">Bacteroides plebeius</name>
    <dbReference type="NCBI Taxonomy" id="484018"/>
    <lineage>
        <taxon>Bacteria</taxon>
        <taxon>Pseudomonadati</taxon>
        <taxon>Bacteroidota</taxon>
        <taxon>Bacteroidia</taxon>
        <taxon>Bacteroidales</taxon>
        <taxon>Bacteroidaceae</taxon>
        <taxon>Phocaeicola</taxon>
    </lineage>
</organism>